<accession>O59736</accession>
<name>LEU1_SCHPO</name>
<proteinExistence type="inferred from homology"/>
<sequence length="584" mass="64042">MKSTFEAAGRVAKGMLKDPSKKYKPFKGIQLPNRQWPNKVLTKAPRWLSTDLRDGNQALPDPMNGQEKLRYFKLLCSIGFKEIEVGFPSASQTDFAFVRHLIETPGLIPDDVTISALTPSREPLILRTIEALRGAKNATVHLYNACSPLFREVVFRNSKQETLDLAIKGSKIVTAATKNALESKETNWGFEYSPETFSDTEPDFALEVCEAVKGMWKPSAAQPIIFNLPATVEMSTPNTYADLIEYFSTNISEREKVCVSLHPHNDRGTAVAAAELGQLAGGDRIEGCLFGNGERTGNVDLVTLAFNLYTQGVSPNLDFSKLDEIIRITEDCNKINVHPRHPYAGNLVFTAFSGSHQDAISKGLKAYDERKAVDPVWKVPYLPLDPHDVNSEYAAIIRVNSQSGKGGVAYLLKTNCGLDLPRALQVEFGSIVKDYSDTKGKELSIGEISDLFYTTYYLEFPGRFSVNDYTLSSNGPQSKCIKCVVDIKGEKKDTPSRVVIEGVGNGPLSALVDALRRQFNISFDIGQYSEHAIGSGNGVKAASYVEIIFNNTSFWGVGIDADVTSAGLKAVMSGVSRASRAFAK</sequence>
<keyword id="KW-0028">Amino-acid biosynthesis</keyword>
<keyword id="KW-0100">Branched-chain amino acid biosynthesis</keyword>
<keyword id="KW-0432">Leucine biosynthesis</keyword>
<keyword id="KW-0479">Metal-binding</keyword>
<keyword id="KW-1185">Reference proteome</keyword>
<keyword id="KW-0808">Transferase</keyword>
<reference key="1">
    <citation type="journal article" date="2002" name="Nature">
        <title>The genome sequence of Schizosaccharomyces pombe.</title>
        <authorList>
            <person name="Wood V."/>
            <person name="Gwilliam R."/>
            <person name="Rajandream M.A."/>
            <person name="Lyne M.H."/>
            <person name="Lyne R."/>
            <person name="Stewart A."/>
            <person name="Sgouros J.G."/>
            <person name="Peat N."/>
            <person name="Hayles J."/>
            <person name="Baker S.G."/>
            <person name="Basham D."/>
            <person name="Bowman S."/>
            <person name="Brooks K."/>
            <person name="Brown D."/>
            <person name="Brown S."/>
            <person name="Chillingworth T."/>
            <person name="Churcher C.M."/>
            <person name="Collins M."/>
            <person name="Connor R."/>
            <person name="Cronin A."/>
            <person name="Davis P."/>
            <person name="Feltwell T."/>
            <person name="Fraser A."/>
            <person name="Gentles S."/>
            <person name="Goble A."/>
            <person name="Hamlin N."/>
            <person name="Harris D.E."/>
            <person name="Hidalgo J."/>
            <person name="Hodgson G."/>
            <person name="Holroyd S."/>
            <person name="Hornsby T."/>
            <person name="Howarth S."/>
            <person name="Huckle E.J."/>
            <person name="Hunt S."/>
            <person name="Jagels K."/>
            <person name="James K.D."/>
            <person name="Jones L."/>
            <person name="Jones M."/>
            <person name="Leather S."/>
            <person name="McDonald S."/>
            <person name="McLean J."/>
            <person name="Mooney P."/>
            <person name="Moule S."/>
            <person name="Mungall K.L."/>
            <person name="Murphy L.D."/>
            <person name="Niblett D."/>
            <person name="Odell C."/>
            <person name="Oliver K."/>
            <person name="O'Neil S."/>
            <person name="Pearson D."/>
            <person name="Quail M.A."/>
            <person name="Rabbinowitsch E."/>
            <person name="Rutherford K.M."/>
            <person name="Rutter S."/>
            <person name="Saunders D."/>
            <person name="Seeger K."/>
            <person name="Sharp S."/>
            <person name="Skelton J."/>
            <person name="Simmonds M.N."/>
            <person name="Squares R."/>
            <person name="Squares S."/>
            <person name="Stevens K."/>
            <person name="Taylor K."/>
            <person name="Taylor R.G."/>
            <person name="Tivey A."/>
            <person name="Walsh S.V."/>
            <person name="Warren T."/>
            <person name="Whitehead S."/>
            <person name="Woodward J.R."/>
            <person name="Volckaert G."/>
            <person name="Aert R."/>
            <person name="Robben J."/>
            <person name="Grymonprez B."/>
            <person name="Weltjens I."/>
            <person name="Vanstreels E."/>
            <person name="Rieger M."/>
            <person name="Schaefer M."/>
            <person name="Mueller-Auer S."/>
            <person name="Gabel C."/>
            <person name="Fuchs M."/>
            <person name="Duesterhoeft A."/>
            <person name="Fritzc C."/>
            <person name="Holzer E."/>
            <person name="Moestl D."/>
            <person name="Hilbert H."/>
            <person name="Borzym K."/>
            <person name="Langer I."/>
            <person name="Beck A."/>
            <person name="Lehrach H."/>
            <person name="Reinhardt R."/>
            <person name="Pohl T.M."/>
            <person name="Eger P."/>
            <person name="Zimmermann W."/>
            <person name="Wedler H."/>
            <person name="Wambutt R."/>
            <person name="Purnelle B."/>
            <person name="Goffeau A."/>
            <person name="Cadieu E."/>
            <person name="Dreano S."/>
            <person name="Gloux S."/>
            <person name="Lelaure V."/>
            <person name="Mottier S."/>
            <person name="Galibert F."/>
            <person name="Aves S.J."/>
            <person name="Xiang Z."/>
            <person name="Hunt C."/>
            <person name="Moore K."/>
            <person name="Hurst S.M."/>
            <person name="Lucas M."/>
            <person name="Rochet M."/>
            <person name="Gaillardin C."/>
            <person name="Tallada V.A."/>
            <person name="Garzon A."/>
            <person name="Thode G."/>
            <person name="Daga R.R."/>
            <person name="Cruzado L."/>
            <person name="Jimenez J."/>
            <person name="Sanchez M."/>
            <person name="del Rey F."/>
            <person name="Benito J."/>
            <person name="Dominguez A."/>
            <person name="Revuelta J.L."/>
            <person name="Moreno S."/>
            <person name="Armstrong J."/>
            <person name="Forsburg S.L."/>
            <person name="Cerutti L."/>
            <person name="Lowe T."/>
            <person name="McCombie W.R."/>
            <person name="Paulsen I."/>
            <person name="Potashkin J."/>
            <person name="Shpakovski G.V."/>
            <person name="Ussery D."/>
            <person name="Barrell B.G."/>
            <person name="Nurse P."/>
        </authorList>
    </citation>
    <scope>NUCLEOTIDE SEQUENCE [LARGE SCALE GENOMIC DNA]</scope>
    <source>
        <strain>972 / ATCC 24843</strain>
    </source>
</reference>
<comment type="function">
    <text>Catalyzes the condensation of the acetyl group of acetyl-CoA with 3-methyl-2-oxobutanoate (2-oxoisovalerate) to form 3-carboxy-3-hydroxy-4-methylpentanoate (2-isopropylmalate).</text>
</comment>
<comment type="catalytic activity">
    <reaction evidence="1">
        <text>3-methyl-2-oxobutanoate + acetyl-CoA + H2O = (2S)-2-isopropylmalate + CoA + H(+)</text>
        <dbReference type="Rhea" id="RHEA:21524"/>
        <dbReference type="ChEBI" id="CHEBI:1178"/>
        <dbReference type="ChEBI" id="CHEBI:11851"/>
        <dbReference type="ChEBI" id="CHEBI:15377"/>
        <dbReference type="ChEBI" id="CHEBI:15378"/>
        <dbReference type="ChEBI" id="CHEBI:57287"/>
        <dbReference type="ChEBI" id="CHEBI:57288"/>
        <dbReference type="EC" id="2.3.3.13"/>
    </reaction>
</comment>
<comment type="cofactor">
    <cofactor evidence="1 2">
        <name>a divalent metal cation</name>
        <dbReference type="ChEBI" id="CHEBI:60240"/>
    </cofactor>
</comment>
<comment type="pathway">
    <text>Amino-acid biosynthesis; L-leucine biosynthesis; L-leucine from 3-methyl-2-oxobutanoate: step 1/4.</text>
</comment>
<comment type="subunit">
    <text evidence="1">Homodimer.</text>
</comment>
<comment type="similarity">
    <text evidence="4">Belongs to the alpha-IPM synthase/homocitrate synthase family. LeuA type 2 subfamily.</text>
</comment>
<gene>
    <name type="primary">leu3</name>
    <name type="ORF">SPBC3E7.16c</name>
    <name type="ORF">SPBC4F6.03c</name>
</gene>
<dbReference type="EC" id="2.3.3.13"/>
<dbReference type="EMBL" id="CU329671">
    <property type="protein sequence ID" value="CAA19019.2"/>
    <property type="molecule type" value="Genomic_DNA"/>
</dbReference>
<dbReference type="PIR" id="T40500">
    <property type="entry name" value="T40500"/>
</dbReference>
<dbReference type="RefSeq" id="NP_596103.2">
    <property type="nucleotide sequence ID" value="NM_001022019.3"/>
</dbReference>
<dbReference type="SMR" id="O59736"/>
<dbReference type="BioGRID" id="277518">
    <property type="interactions" value="9"/>
</dbReference>
<dbReference type="FunCoup" id="O59736">
    <property type="interactions" value="352"/>
</dbReference>
<dbReference type="STRING" id="284812.O59736"/>
<dbReference type="iPTMnet" id="O59736"/>
<dbReference type="SwissPalm" id="O59736"/>
<dbReference type="PaxDb" id="4896-SPBC3E7.16c.1"/>
<dbReference type="EnsemblFungi" id="SPBC3E7.16c.1">
    <property type="protein sequence ID" value="SPBC3E7.16c.1:pep"/>
    <property type="gene ID" value="SPBC3E7.16c"/>
</dbReference>
<dbReference type="GeneID" id="2541003"/>
<dbReference type="KEGG" id="spo:2541003"/>
<dbReference type="PomBase" id="SPBC3E7.16c">
    <property type="gene designation" value="leu3"/>
</dbReference>
<dbReference type="VEuPathDB" id="FungiDB:SPBC3E7.16c"/>
<dbReference type="eggNOG" id="KOG2367">
    <property type="taxonomic scope" value="Eukaryota"/>
</dbReference>
<dbReference type="HOGENOM" id="CLU_004588_3_0_1"/>
<dbReference type="InParanoid" id="O59736"/>
<dbReference type="OMA" id="WPDKVID"/>
<dbReference type="PhylomeDB" id="O59736"/>
<dbReference type="UniPathway" id="UPA00048">
    <property type="reaction ID" value="UER00070"/>
</dbReference>
<dbReference type="PRO" id="PR:O59736"/>
<dbReference type="Proteomes" id="UP000002485">
    <property type="component" value="Chromosome II"/>
</dbReference>
<dbReference type="GO" id="GO:0005739">
    <property type="term" value="C:mitochondrion"/>
    <property type="evidence" value="ECO:0007005"/>
    <property type="project" value="PomBase"/>
</dbReference>
<dbReference type="GO" id="GO:0003852">
    <property type="term" value="F:2-isopropylmalate synthase activity"/>
    <property type="evidence" value="ECO:0000318"/>
    <property type="project" value="GO_Central"/>
</dbReference>
<dbReference type="GO" id="GO:0046872">
    <property type="term" value="F:metal ion binding"/>
    <property type="evidence" value="ECO:0007669"/>
    <property type="project" value="UniProtKB-KW"/>
</dbReference>
<dbReference type="GO" id="GO:0009098">
    <property type="term" value="P:L-leucine biosynthetic process"/>
    <property type="evidence" value="ECO:0000315"/>
    <property type="project" value="PomBase"/>
</dbReference>
<dbReference type="CDD" id="cd07942">
    <property type="entry name" value="DRE_TIM_LeuA"/>
    <property type="match status" value="1"/>
</dbReference>
<dbReference type="FunFam" id="3.20.20.70:FF:000045">
    <property type="entry name" value="2-isopropylmalate synthase"/>
    <property type="match status" value="1"/>
</dbReference>
<dbReference type="Gene3D" id="3.30.160.270">
    <property type="match status" value="1"/>
</dbReference>
<dbReference type="Gene3D" id="3.20.20.70">
    <property type="entry name" value="Aldolase class I"/>
    <property type="match status" value="1"/>
</dbReference>
<dbReference type="HAMAP" id="MF_00572">
    <property type="entry name" value="LeuA_type2"/>
    <property type="match status" value="1"/>
</dbReference>
<dbReference type="InterPro" id="IPR013709">
    <property type="entry name" value="2-isopropylmalate_synth_dimer"/>
</dbReference>
<dbReference type="InterPro" id="IPR002034">
    <property type="entry name" value="AIPM/Hcit_synth_CS"/>
</dbReference>
<dbReference type="InterPro" id="IPR013785">
    <property type="entry name" value="Aldolase_TIM"/>
</dbReference>
<dbReference type="InterPro" id="IPR005668">
    <property type="entry name" value="IPM_Synthase"/>
</dbReference>
<dbReference type="InterPro" id="IPR054692">
    <property type="entry name" value="LeuA-like_post-cat"/>
</dbReference>
<dbReference type="InterPro" id="IPR036230">
    <property type="entry name" value="LeuA_allosteric_dom_sf"/>
</dbReference>
<dbReference type="InterPro" id="IPR039371">
    <property type="entry name" value="LeuA_N_DRE-TIM"/>
</dbReference>
<dbReference type="InterPro" id="IPR000891">
    <property type="entry name" value="PYR_CT"/>
</dbReference>
<dbReference type="NCBIfam" id="TIGR00970">
    <property type="entry name" value="leuA_yeast"/>
    <property type="match status" value="1"/>
</dbReference>
<dbReference type="NCBIfam" id="NF002991">
    <property type="entry name" value="PRK03739.1"/>
    <property type="match status" value="1"/>
</dbReference>
<dbReference type="PANTHER" id="PTHR46911">
    <property type="match status" value="1"/>
</dbReference>
<dbReference type="PANTHER" id="PTHR46911:SF1">
    <property type="entry name" value="2-ISOPROPYLMALATE SYNTHASE"/>
    <property type="match status" value="1"/>
</dbReference>
<dbReference type="Pfam" id="PF00682">
    <property type="entry name" value="HMGL-like"/>
    <property type="match status" value="1"/>
</dbReference>
<dbReference type="Pfam" id="PF22615">
    <property type="entry name" value="IPMS_D2"/>
    <property type="match status" value="1"/>
</dbReference>
<dbReference type="Pfam" id="PF08502">
    <property type="entry name" value="LeuA_dimer"/>
    <property type="match status" value="1"/>
</dbReference>
<dbReference type="SMART" id="SM00917">
    <property type="entry name" value="LeuA_dimer"/>
    <property type="match status" value="1"/>
</dbReference>
<dbReference type="SUPFAM" id="SSF110921">
    <property type="entry name" value="2-isopropylmalate synthase LeuA, allosteric (dimerisation) domain"/>
    <property type="match status" value="1"/>
</dbReference>
<dbReference type="SUPFAM" id="SSF51569">
    <property type="entry name" value="Aldolase"/>
    <property type="match status" value="1"/>
</dbReference>
<dbReference type="SUPFAM" id="SSF89000">
    <property type="entry name" value="post-HMGL domain-like"/>
    <property type="match status" value="1"/>
</dbReference>
<dbReference type="PROSITE" id="PS00815">
    <property type="entry name" value="AIPM_HOMOCIT_SYNTH_1"/>
    <property type="match status" value="1"/>
</dbReference>
<dbReference type="PROSITE" id="PS00816">
    <property type="entry name" value="AIPM_HOMOCIT_SYNTH_2"/>
    <property type="match status" value="1"/>
</dbReference>
<dbReference type="PROSITE" id="PS50991">
    <property type="entry name" value="PYR_CT"/>
    <property type="match status" value="1"/>
</dbReference>
<organism>
    <name type="scientific">Schizosaccharomyces pombe (strain 972 / ATCC 24843)</name>
    <name type="common">Fission yeast</name>
    <dbReference type="NCBI Taxonomy" id="284812"/>
    <lineage>
        <taxon>Eukaryota</taxon>
        <taxon>Fungi</taxon>
        <taxon>Dikarya</taxon>
        <taxon>Ascomycota</taxon>
        <taxon>Taphrinomycotina</taxon>
        <taxon>Schizosaccharomycetes</taxon>
        <taxon>Schizosaccharomycetales</taxon>
        <taxon>Schizosaccharomycetaceae</taxon>
        <taxon>Schizosaccharomyces</taxon>
    </lineage>
</organism>
<evidence type="ECO:0000250" key="1">
    <source>
        <dbReference type="UniProtKB" id="P9WQB3"/>
    </source>
</evidence>
<evidence type="ECO:0000250" key="2">
    <source>
        <dbReference type="UniProtKB" id="Q9JZG1"/>
    </source>
</evidence>
<evidence type="ECO:0000255" key="3">
    <source>
        <dbReference type="PROSITE-ProRule" id="PRU01151"/>
    </source>
</evidence>
<evidence type="ECO:0000305" key="4"/>
<feature type="chain" id="PRO_0000140445" description="2-isopropylmalate synthase">
    <location>
        <begin position="1"/>
        <end position="584"/>
    </location>
</feature>
<feature type="domain" description="Pyruvate carboxyltransferase" evidence="3">
    <location>
        <begin position="45"/>
        <end position="323"/>
    </location>
</feature>
<feature type="binding site" evidence="1">
    <location>
        <position position="54"/>
    </location>
    <ligand>
        <name>a divalent metal cation</name>
        <dbReference type="ChEBI" id="CHEBI:60240"/>
    </ligand>
</feature>
<feature type="binding site" evidence="1">
    <location>
        <position position="262"/>
    </location>
    <ligand>
        <name>a divalent metal cation</name>
        <dbReference type="ChEBI" id="CHEBI:60240"/>
    </ligand>
</feature>
<feature type="binding site" evidence="1">
    <location>
        <position position="264"/>
    </location>
    <ligand>
        <name>a divalent metal cation</name>
        <dbReference type="ChEBI" id="CHEBI:60240"/>
    </ligand>
</feature>
<feature type="binding site" evidence="1">
    <location>
        <position position="298"/>
    </location>
    <ligand>
        <name>a divalent metal cation</name>
        <dbReference type="ChEBI" id="CHEBI:60240"/>
    </ligand>
</feature>
<protein>
    <recommendedName>
        <fullName>2-isopropylmalate synthase</fullName>
        <ecNumber>2.3.3.13</ecNumber>
    </recommendedName>
    <alternativeName>
        <fullName>Alpha-IPM synthase</fullName>
    </alternativeName>
    <alternativeName>
        <fullName>Alpha-isopropylmalate synthase</fullName>
    </alternativeName>
</protein>